<organism>
    <name type="scientific">Geobacter sp. (strain M21)</name>
    <dbReference type="NCBI Taxonomy" id="443144"/>
    <lineage>
        <taxon>Bacteria</taxon>
        <taxon>Pseudomonadati</taxon>
        <taxon>Thermodesulfobacteriota</taxon>
        <taxon>Desulfuromonadia</taxon>
        <taxon>Geobacterales</taxon>
        <taxon>Geobacteraceae</taxon>
        <taxon>Geobacter</taxon>
    </lineage>
</organism>
<keyword id="KW-0687">Ribonucleoprotein</keyword>
<keyword id="KW-0689">Ribosomal protein</keyword>
<sequence>MNQIDAIEMAQMKKNIPKFIPGDTIKVQVKIVEGDKSRIQAFQGVCLGRQNGGIRESFTVRKISNGVGVERVFPLHSPSIEAIEVVTRGQVRRAKLYYLRKLRGKASRIKERKYVAGQ</sequence>
<gene>
    <name evidence="1" type="primary">rplS</name>
    <name type="ordered locus">GM21_3488</name>
</gene>
<protein>
    <recommendedName>
        <fullName evidence="1">Large ribosomal subunit protein bL19</fullName>
    </recommendedName>
    <alternativeName>
        <fullName evidence="2">50S ribosomal protein L19</fullName>
    </alternativeName>
</protein>
<accession>C6E5I6</accession>
<dbReference type="EMBL" id="CP001661">
    <property type="protein sequence ID" value="ACT19510.1"/>
    <property type="molecule type" value="Genomic_DNA"/>
</dbReference>
<dbReference type="SMR" id="C6E5I6"/>
<dbReference type="STRING" id="443144.GM21_3488"/>
<dbReference type="KEGG" id="gem:GM21_3488"/>
<dbReference type="eggNOG" id="COG0335">
    <property type="taxonomic scope" value="Bacteria"/>
</dbReference>
<dbReference type="HOGENOM" id="CLU_103507_2_1_7"/>
<dbReference type="OrthoDB" id="9803541at2"/>
<dbReference type="GO" id="GO:0022625">
    <property type="term" value="C:cytosolic large ribosomal subunit"/>
    <property type="evidence" value="ECO:0007669"/>
    <property type="project" value="TreeGrafter"/>
</dbReference>
<dbReference type="GO" id="GO:0003735">
    <property type="term" value="F:structural constituent of ribosome"/>
    <property type="evidence" value="ECO:0007669"/>
    <property type="project" value="InterPro"/>
</dbReference>
<dbReference type="GO" id="GO:0006412">
    <property type="term" value="P:translation"/>
    <property type="evidence" value="ECO:0007669"/>
    <property type="project" value="UniProtKB-UniRule"/>
</dbReference>
<dbReference type="FunFam" id="2.30.30.790:FF:000001">
    <property type="entry name" value="50S ribosomal protein L19"/>
    <property type="match status" value="1"/>
</dbReference>
<dbReference type="Gene3D" id="2.30.30.790">
    <property type="match status" value="1"/>
</dbReference>
<dbReference type="HAMAP" id="MF_00402">
    <property type="entry name" value="Ribosomal_bL19"/>
    <property type="match status" value="1"/>
</dbReference>
<dbReference type="InterPro" id="IPR001857">
    <property type="entry name" value="Ribosomal_bL19"/>
</dbReference>
<dbReference type="InterPro" id="IPR018257">
    <property type="entry name" value="Ribosomal_bL19_CS"/>
</dbReference>
<dbReference type="InterPro" id="IPR038657">
    <property type="entry name" value="Ribosomal_bL19_sf"/>
</dbReference>
<dbReference type="InterPro" id="IPR008991">
    <property type="entry name" value="Translation_prot_SH3-like_sf"/>
</dbReference>
<dbReference type="NCBIfam" id="TIGR01024">
    <property type="entry name" value="rplS_bact"/>
    <property type="match status" value="1"/>
</dbReference>
<dbReference type="PANTHER" id="PTHR15680:SF9">
    <property type="entry name" value="LARGE RIBOSOMAL SUBUNIT PROTEIN BL19M"/>
    <property type="match status" value="1"/>
</dbReference>
<dbReference type="PANTHER" id="PTHR15680">
    <property type="entry name" value="RIBOSOMAL PROTEIN L19"/>
    <property type="match status" value="1"/>
</dbReference>
<dbReference type="Pfam" id="PF01245">
    <property type="entry name" value="Ribosomal_L19"/>
    <property type="match status" value="1"/>
</dbReference>
<dbReference type="PIRSF" id="PIRSF002191">
    <property type="entry name" value="Ribosomal_L19"/>
    <property type="match status" value="1"/>
</dbReference>
<dbReference type="PRINTS" id="PR00061">
    <property type="entry name" value="RIBOSOMALL19"/>
</dbReference>
<dbReference type="SUPFAM" id="SSF50104">
    <property type="entry name" value="Translation proteins SH3-like domain"/>
    <property type="match status" value="1"/>
</dbReference>
<dbReference type="PROSITE" id="PS01015">
    <property type="entry name" value="RIBOSOMAL_L19"/>
    <property type="match status" value="1"/>
</dbReference>
<proteinExistence type="inferred from homology"/>
<feature type="chain" id="PRO_1000205891" description="Large ribosomal subunit protein bL19">
    <location>
        <begin position="1"/>
        <end position="118"/>
    </location>
</feature>
<evidence type="ECO:0000255" key="1">
    <source>
        <dbReference type="HAMAP-Rule" id="MF_00402"/>
    </source>
</evidence>
<evidence type="ECO:0000305" key="2"/>
<comment type="function">
    <text evidence="1">This protein is located at the 30S-50S ribosomal subunit interface and may play a role in the structure and function of the aminoacyl-tRNA binding site.</text>
</comment>
<comment type="similarity">
    <text evidence="1">Belongs to the bacterial ribosomal protein bL19 family.</text>
</comment>
<name>RL19_GEOSM</name>
<reference key="1">
    <citation type="submission" date="2009-07" db="EMBL/GenBank/DDBJ databases">
        <title>Complete sequence of Geobacter sp. M21.</title>
        <authorList>
            <consortium name="US DOE Joint Genome Institute"/>
            <person name="Lucas S."/>
            <person name="Copeland A."/>
            <person name="Lapidus A."/>
            <person name="Glavina del Rio T."/>
            <person name="Dalin E."/>
            <person name="Tice H."/>
            <person name="Bruce D."/>
            <person name="Goodwin L."/>
            <person name="Pitluck S."/>
            <person name="Saunders E."/>
            <person name="Brettin T."/>
            <person name="Detter J.C."/>
            <person name="Han C."/>
            <person name="Larimer F."/>
            <person name="Land M."/>
            <person name="Hauser L."/>
            <person name="Kyrpides N."/>
            <person name="Ovchinnikova G."/>
            <person name="Lovley D."/>
        </authorList>
    </citation>
    <scope>NUCLEOTIDE SEQUENCE [LARGE SCALE GENOMIC DNA]</scope>
    <source>
        <strain>M21</strain>
    </source>
</reference>